<sequence length="93" mass="9962">AYKVTLKTPDGDITFDVEPGERLIDIGSEKADLPLSCQAGACSTCLGKIVSGTVDQSEGSFLDDEQIEQGYVLTCIAIPESDVVIETHKEDEL</sequence>
<proteinExistence type="evidence at protein level"/>
<keyword id="KW-0001">2Fe-2S</keyword>
<keyword id="KW-0002">3D-structure</keyword>
<keyword id="KW-0150">Chloroplast</keyword>
<keyword id="KW-0903">Direct protein sequencing</keyword>
<keyword id="KW-0249">Electron transport</keyword>
<keyword id="KW-0408">Iron</keyword>
<keyword id="KW-0411">Iron-sulfur</keyword>
<keyword id="KW-0479">Metal-binding</keyword>
<keyword id="KW-0934">Plastid</keyword>
<keyword id="KW-0813">Transport</keyword>
<organism>
    <name type="scientific">Equisetum arvense</name>
    <name type="common">Field horsetail</name>
    <name type="synonym">Common horsetail</name>
    <dbReference type="NCBI Taxonomy" id="3258"/>
    <lineage>
        <taxon>Eukaryota</taxon>
        <taxon>Viridiplantae</taxon>
        <taxon>Streptophyta</taxon>
        <taxon>Embryophyta</taxon>
        <taxon>Tracheophyta</taxon>
        <taxon>Polypodiopsida</taxon>
        <taxon>Equisetidae</taxon>
        <taxon>Equisetales</taxon>
        <taxon>Equisetaceae</taxon>
        <taxon>Equisetum</taxon>
    </lineage>
</organism>
<accession>P00237</accession>
<evidence type="ECO:0000255" key="1">
    <source>
        <dbReference type="PROSITE-ProRule" id="PRU00465"/>
    </source>
</evidence>
<evidence type="ECO:0000305" key="2"/>
<evidence type="ECO:0007829" key="3">
    <source>
        <dbReference type="PDB" id="1WRI"/>
    </source>
</evidence>
<name>FER2_EQUAR</name>
<protein>
    <recommendedName>
        <fullName>Ferredoxin-2</fullName>
    </recommendedName>
    <alternativeName>
        <fullName>Ferredoxin II</fullName>
    </alternativeName>
</protein>
<comment type="function">
    <text>Ferredoxins are iron-sulfur proteins that transfer electrons in a wide variety of metabolic reactions.</text>
</comment>
<comment type="cofactor">
    <cofactor>
        <name>[2Fe-2S] cluster</name>
        <dbReference type="ChEBI" id="CHEBI:190135"/>
    </cofactor>
    <text>Binds 1 [2Fe-2S] cluster.</text>
</comment>
<comment type="subcellular location">
    <subcellularLocation>
        <location>Plastid</location>
        <location>Chloroplast</location>
    </subcellularLocation>
</comment>
<comment type="similarity">
    <text evidence="2">Belongs to the 2Fe2S plant-type ferredoxin family.</text>
</comment>
<reference key="1">
    <citation type="journal article" date="1977" name="J. Biochem.">
        <title>Horsetail (Equisetum arvense) ferredoxins I and II Amino acid sequences and gene duplication.</title>
        <authorList>
            <person name="Hase T."/>
            <person name="Wada K."/>
            <person name="Matsubara H."/>
        </authorList>
    </citation>
    <scope>PROTEIN SEQUENCE</scope>
</reference>
<dbReference type="PIR" id="B04609">
    <property type="entry name" value="FEEQ2F"/>
</dbReference>
<dbReference type="PDB" id="1WRI">
    <property type="method" value="X-ray"/>
    <property type="resolution" value="1.20 A"/>
    <property type="chains" value="A=1-93"/>
</dbReference>
<dbReference type="PDBsum" id="1WRI"/>
<dbReference type="SMR" id="P00237"/>
<dbReference type="EvolutionaryTrace" id="P00237"/>
<dbReference type="GO" id="GO:0009507">
    <property type="term" value="C:chloroplast"/>
    <property type="evidence" value="ECO:0007669"/>
    <property type="project" value="UniProtKB-SubCell"/>
</dbReference>
<dbReference type="GO" id="GO:0051537">
    <property type="term" value="F:2 iron, 2 sulfur cluster binding"/>
    <property type="evidence" value="ECO:0007669"/>
    <property type="project" value="UniProtKB-KW"/>
</dbReference>
<dbReference type="GO" id="GO:0009055">
    <property type="term" value="F:electron transfer activity"/>
    <property type="evidence" value="ECO:0007669"/>
    <property type="project" value="InterPro"/>
</dbReference>
<dbReference type="GO" id="GO:0046872">
    <property type="term" value="F:metal ion binding"/>
    <property type="evidence" value="ECO:0007669"/>
    <property type="project" value="UniProtKB-KW"/>
</dbReference>
<dbReference type="GO" id="GO:0022900">
    <property type="term" value="P:electron transport chain"/>
    <property type="evidence" value="ECO:0007669"/>
    <property type="project" value="InterPro"/>
</dbReference>
<dbReference type="CDD" id="cd00207">
    <property type="entry name" value="fer2"/>
    <property type="match status" value="1"/>
</dbReference>
<dbReference type="Gene3D" id="3.10.20.30">
    <property type="match status" value="1"/>
</dbReference>
<dbReference type="InterPro" id="IPR036010">
    <property type="entry name" value="2Fe-2S_ferredoxin-like_sf"/>
</dbReference>
<dbReference type="InterPro" id="IPR001041">
    <property type="entry name" value="2Fe-2S_ferredoxin-type"/>
</dbReference>
<dbReference type="InterPro" id="IPR006058">
    <property type="entry name" value="2Fe2S_fd_BS"/>
</dbReference>
<dbReference type="InterPro" id="IPR012675">
    <property type="entry name" value="Beta-grasp_dom_sf"/>
</dbReference>
<dbReference type="InterPro" id="IPR010241">
    <property type="entry name" value="Fd_pln"/>
</dbReference>
<dbReference type="NCBIfam" id="TIGR02008">
    <property type="entry name" value="fdx_plant"/>
    <property type="match status" value="1"/>
</dbReference>
<dbReference type="PANTHER" id="PTHR43112">
    <property type="entry name" value="FERREDOXIN"/>
    <property type="match status" value="1"/>
</dbReference>
<dbReference type="PANTHER" id="PTHR43112:SF3">
    <property type="entry name" value="FERREDOXIN-2, CHLOROPLASTIC"/>
    <property type="match status" value="1"/>
</dbReference>
<dbReference type="Pfam" id="PF00111">
    <property type="entry name" value="Fer2"/>
    <property type="match status" value="1"/>
</dbReference>
<dbReference type="SUPFAM" id="SSF54292">
    <property type="entry name" value="2Fe-2S ferredoxin-like"/>
    <property type="match status" value="1"/>
</dbReference>
<dbReference type="PROSITE" id="PS00197">
    <property type="entry name" value="2FE2S_FER_1"/>
    <property type="match status" value="1"/>
</dbReference>
<dbReference type="PROSITE" id="PS51085">
    <property type="entry name" value="2FE2S_FER_2"/>
    <property type="match status" value="1"/>
</dbReference>
<feature type="chain" id="PRO_0000189329" description="Ferredoxin-2">
    <location>
        <begin position="1"/>
        <end position="93"/>
    </location>
</feature>
<feature type="domain" description="2Fe-2S ferredoxin-type" evidence="1">
    <location>
        <begin position="2"/>
        <end position="91"/>
    </location>
</feature>
<feature type="binding site" evidence="1">
    <location>
        <position position="37"/>
    </location>
    <ligand>
        <name>[2Fe-2S] cluster</name>
        <dbReference type="ChEBI" id="CHEBI:190135"/>
    </ligand>
</feature>
<feature type="binding site" evidence="1">
    <location>
        <position position="42"/>
    </location>
    <ligand>
        <name>[2Fe-2S] cluster</name>
        <dbReference type="ChEBI" id="CHEBI:190135"/>
    </ligand>
</feature>
<feature type="binding site" evidence="1">
    <location>
        <position position="45"/>
    </location>
    <ligand>
        <name>[2Fe-2S] cluster</name>
        <dbReference type="ChEBI" id="CHEBI:190135"/>
    </ligand>
</feature>
<feature type="binding site" evidence="1">
    <location>
        <position position="75"/>
    </location>
    <ligand>
        <name>[2Fe-2S] cluster</name>
        <dbReference type="ChEBI" id="CHEBI:190135"/>
    </ligand>
</feature>
<feature type="strand" evidence="3">
    <location>
        <begin position="2"/>
        <end position="8"/>
    </location>
</feature>
<feature type="strand" evidence="3">
    <location>
        <begin position="11"/>
        <end position="17"/>
    </location>
</feature>
<feature type="helix" evidence="3">
    <location>
        <begin position="24"/>
        <end position="30"/>
    </location>
</feature>
<feature type="strand" evidence="3">
    <location>
        <begin position="36"/>
        <end position="43"/>
    </location>
</feature>
<feature type="strand" evidence="3">
    <location>
        <begin position="46"/>
        <end position="52"/>
    </location>
</feature>
<feature type="helix" evidence="3">
    <location>
        <begin position="64"/>
        <end position="68"/>
    </location>
</feature>
<feature type="strand" evidence="3">
    <location>
        <begin position="71"/>
        <end position="73"/>
    </location>
</feature>
<feature type="turn" evidence="3">
    <location>
        <begin position="74"/>
        <end position="76"/>
    </location>
</feature>
<feature type="strand" evidence="3">
    <location>
        <begin position="78"/>
        <end position="81"/>
    </location>
</feature>
<feature type="strand" evidence="3">
    <location>
        <begin position="83"/>
        <end position="86"/>
    </location>
</feature>
<feature type="helix" evidence="3">
    <location>
        <begin position="90"/>
        <end position="92"/>
    </location>
</feature>